<keyword id="KW-0227">DNA damage</keyword>
<keyword id="KW-0233">DNA recombination</keyword>
<keyword id="KW-0234">DNA repair</keyword>
<comment type="function">
    <text evidence="1">Involved in DNA repair and RecF pathway recombination.</text>
</comment>
<comment type="similarity">
    <text evidence="1">Belongs to the RecO family.</text>
</comment>
<sequence length="255" mass="29825">MEKCEGIVIRQTSYRESDKIVRMYTREFGKIGVVARGAKKTKSRLAAVTQLFTNGYFTFFGGNGLGTLQQGEVIETFSSIQQDIFMTAYATYVCELLDKATEERQPNPYLYELTFQILRDIDEGYDPQILTQIYEMKMLPVLGLYPTMDKCAICGETTGHFDFSTSSNGIICHRCFEKDRYRMHLPENVVKLLRLFFIFQLDRLGNIDVKQETKDWLQKAIDTYYDEYSGLYLKSRKFIREMDKWENMLKKDSDD</sequence>
<protein>
    <recommendedName>
        <fullName evidence="1">DNA repair protein RecO</fullName>
    </recommendedName>
    <alternativeName>
        <fullName evidence="1">Recombination protein O</fullName>
    </alternativeName>
</protein>
<proteinExistence type="inferred from homology"/>
<gene>
    <name evidence="1" type="primary">recO</name>
    <name type="ordered locus">LMHCC_1110</name>
</gene>
<feature type="chain" id="PRO_1000193392" description="DNA repair protein RecO">
    <location>
        <begin position="1"/>
        <end position="255"/>
    </location>
</feature>
<reference key="1">
    <citation type="journal article" date="2011" name="J. Bacteriol.">
        <title>Genome sequence of lineage III Listeria monocytogenes strain HCC23.</title>
        <authorList>
            <person name="Steele C.L."/>
            <person name="Donaldson J.R."/>
            <person name="Paul D."/>
            <person name="Banes M.M."/>
            <person name="Arick T."/>
            <person name="Bridges S.M."/>
            <person name="Lawrence M.L."/>
        </authorList>
    </citation>
    <scope>NUCLEOTIDE SEQUENCE [LARGE SCALE GENOMIC DNA]</scope>
    <source>
        <strain>HCC23</strain>
    </source>
</reference>
<organism>
    <name type="scientific">Listeria monocytogenes serotype 4a (strain HCC23)</name>
    <dbReference type="NCBI Taxonomy" id="552536"/>
    <lineage>
        <taxon>Bacteria</taxon>
        <taxon>Bacillati</taxon>
        <taxon>Bacillota</taxon>
        <taxon>Bacilli</taxon>
        <taxon>Bacillales</taxon>
        <taxon>Listeriaceae</taxon>
        <taxon>Listeria</taxon>
    </lineage>
</organism>
<dbReference type="EMBL" id="CP001175">
    <property type="protein sequence ID" value="ACK39458.1"/>
    <property type="molecule type" value="Genomic_DNA"/>
</dbReference>
<dbReference type="RefSeq" id="WP_003730435.1">
    <property type="nucleotide sequence ID" value="NC_011660.1"/>
</dbReference>
<dbReference type="SMR" id="B8DE51"/>
<dbReference type="KEGG" id="lmh:LMHCC_1110"/>
<dbReference type="HOGENOM" id="CLU_066632_4_0_9"/>
<dbReference type="GO" id="GO:0043590">
    <property type="term" value="C:bacterial nucleoid"/>
    <property type="evidence" value="ECO:0007669"/>
    <property type="project" value="TreeGrafter"/>
</dbReference>
<dbReference type="GO" id="GO:0006310">
    <property type="term" value="P:DNA recombination"/>
    <property type="evidence" value="ECO:0007669"/>
    <property type="project" value="UniProtKB-UniRule"/>
</dbReference>
<dbReference type="GO" id="GO:0006302">
    <property type="term" value="P:double-strand break repair"/>
    <property type="evidence" value="ECO:0007669"/>
    <property type="project" value="TreeGrafter"/>
</dbReference>
<dbReference type="Gene3D" id="2.40.50.140">
    <property type="entry name" value="Nucleic acid-binding proteins"/>
    <property type="match status" value="1"/>
</dbReference>
<dbReference type="Gene3D" id="1.20.1440.120">
    <property type="entry name" value="Recombination protein O, C-terminal domain"/>
    <property type="match status" value="1"/>
</dbReference>
<dbReference type="HAMAP" id="MF_00201">
    <property type="entry name" value="RecO"/>
    <property type="match status" value="1"/>
</dbReference>
<dbReference type="InterPro" id="IPR037278">
    <property type="entry name" value="ARFGAP/RecO"/>
</dbReference>
<dbReference type="InterPro" id="IPR022572">
    <property type="entry name" value="DNA_rep/recomb_RecO_N"/>
</dbReference>
<dbReference type="InterPro" id="IPR012340">
    <property type="entry name" value="NA-bd_OB-fold"/>
</dbReference>
<dbReference type="InterPro" id="IPR003717">
    <property type="entry name" value="RecO"/>
</dbReference>
<dbReference type="InterPro" id="IPR042242">
    <property type="entry name" value="RecO_C"/>
</dbReference>
<dbReference type="NCBIfam" id="TIGR00613">
    <property type="entry name" value="reco"/>
    <property type="match status" value="1"/>
</dbReference>
<dbReference type="PANTHER" id="PTHR33991">
    <property type="entry name" value="DNA REPAIR PROTEIN RECO"/>
    <property type="match status" value="1"/>
</dbReference>
<dbReference type="PANTHER" id="PTHR33991:SF1">
    <property type="entry name" value="DNA REPAIR PROTEIN RECO"/>
    <property type="match status" value="1"/>
</dbReference>
<dbReference type="Pfam" id="PF02565">
    <property type="entry name" value="RecO_C"/>
    <property type="match status" value="1"/>
</dbReference>
<dbReference type="Pfam" id="PF11967">
    <property type="entry name" value="RecO_N"/>
    <property type="match status" value="1"/>
</dbReference>
<dbReference type="SUPFAM" id="SSF57863">
    <property type="entry name" value="ArfGap/RecO-like zinc finger"/>
    <property type="match status" value="1"/>
</dbReference>
<dbReference type="SUPFAM" id="SSF50249">
    <property type="entry name" value="Nucleic acid-binding proteins"/>
    <property type="match status" value="1"/>
</dbReference>
<evidence type="ECO:0000255" key="1">
    <source>
        <dbReference type="HAMAP-Rule" id="MF_00201"/>
    </source>
</evidence>
<accession>B8DE51</accession>
<name>RECO_LISMH</name>